<comment type="function">
    <text>The S-layer is a paracrystalline mono-layered assembly of proteins which coat the surface of bacteria.</text>
</comment>
<comment type="subcellular location">
    <subcellularLocation>
        <location>Secreted</location>
        <location>Cell wall</location>
        <location>S-layer</location>
    </subcellularLocation>
    <text>This bacterium is covered by a S-layer with hexagonal symmetry.</text>
</comment>
<feature type="signal peptide" evidence="1">
    <location>
        <begin position="1"/>
        <end position="30"/>
    </location>
</feature>
<feature type="chain" id="PRO_0000032632" description="S-layer protein">
    <location>
        <begin position="31"/>
        <end position="1228"/>
    </location>
</feature>
<name>SLAP_GEOSE</name>
<dbReference type="EMBL" id="X71092">
    <property type="protein sequence ID" value="CAA50409.1"/>
    <property type="molecule type" value="Genomic_DNA"/>
</dbReference>
<dbReference type="EMBL" id="AX000218">
    <property type="protein sequence ID" value="CAB77069.1"/>
    <property type="molecule type" value="Unassigned_DNA"/>
</dbReference>
<dbReference type="PIR" id="I40468">
    <property type="entry name" value="I40468"/>
</dbReference>
<dbReference type="GO" id="GO:0005576">
    <property type="term" value="C:extracellular region"/>
    <property type="evidence" value="ECO:0007669"/>
    <property type="project" value="UniProtKB-KW"/>
</dbReference>
<dbReference type="GO" id="GO:0030115">
    <property type="term" value="C:S-layer"/>
    <property type="evidence" value="ECO:0007669"/>
    <property type="project" value="UniProtKB-SubCell"/>
</dbReference>
<dbReference type="Gene3D" id="1.20.58.770">
    <property type="match status" value="1"/>
</dbReference>
<dbReference type="Gene3D" id="1.20.58.780">
    <property type="match status" value="1"/>
</dbReference>
<dbReference type="Gene3D" id="1.20.58.790">
    <property type="match status" value="1"/>
</dbReference>
<dbReference type="Gene3D" id="2.60.40.1220">
    <property type="match status" value="5"/>
</dbReference>
<dbReference type="InterPro" id="IPR014755">
    <property type="entry name" value="Cu-Rt/internalin_Ig-like"/>
</dbReference>
<dbReference type="InterPro" id="IPR041378">
    <property type="entry name" value="S-layer_SbsC_C"/>
</dbReference>
<dbReference type="InterPro" id="IPR032812">
    <property type="entry name" value="SbsA_Ig"/>
</dbReference>
<dbReference type="InterPro" id="IPR054605">
    <property type="entry name" value="SbsA_spectrin-like"/>
</dbReference>
<dbReference type="Pfam" id="PF13205">
    <property type="entry name" value="Big_5"/>
    <property type="match status" value="5"/>
</dbReference>
<dbReference type="Pfam" id="PF18058">
    <property type="entry name" value="SbsC_C"/>
    <property type="match status" value="1"/>
</dbReference>
<dbReference type="Pfam" id="PF22360">
    <property type="entry name" value="SbsC_spectrin-like"/>
    <property type="match status" value="1"/>
</dbReference>
<gene>
    <name type="primary">sbsA</name>
</gene>
<reference key="1">
    <citation type="journal article" date="1994" name="Gene">
        <title>Sequence analysis of the sbsA gene encoding the 130-kDa surface-layer protein of Bacillus stearothermophilus strain PV72.</title>
        <authorList>
            <person name="Kuen B."/>
            <person name="Sleytr U.B."/>
            <person name="Lubitz W."/>
        </authorList>
    </citation>
    <scope>NUCLEOTIDE SEQUENCE [GENOMIC DNA]</scope>
    <source>
        <strain>PV72</strain>
    </source>
</reference>
<protein>
    <recommendedName>
        <fullName>S-layer protein</fullName>
    </recommendedName>
    <alternativeName>
        <fullName>Surface layer protein</fullName>
    </alternativeName>
</protein>
<accession>P35825</accession>
<proteinExistence type="inferred from homology"/>
<evidence type="ECO:0000255" key="1"/>
<keyword id="KW-0134">Cell wall</keyword>
<keyword id="KW-0701">S-layer</keyword>
<keyword id="KW-0964">Secreted</keyword>
<keyword id="KW-0732">Signal</keyword>
<organism>
    <name type="scientific">Geobacillus stearothermophilus</name>
    <name type="common">Bacillus stearothermophilus</name>
    <dbReference type="NCBI Taxonomy" id="1422"/>
    <lineage>
        <taxon>Bacteria</taxon>
        <taxon>Bacillati</taxon>
        <taxon>Bacillota</taxon>
        <taxon>Bacilli</taxon>
        <taxon>Bacillales</taxon>
        <taxon>Anoxybacillaceae</taxon>
        <taxon>Geobacillus</taxon>
    </lineage>
</organism>
<sequence>MDRKKAVKLATASAIAASAFVAANPNASEAATDVATVVSQAKAQFKKAYYTYSHTVTETGEFPNINDVYAEYNKAKKRYRDAVALVNKAGGAKKDAYLADLQKEYETYVFKANPKSGEARVATYIDAYNYATKLDEMRQELEAAVQAKDLEKAEQYYHKIPYEIKTRTVILDRVYGKTTRDLLRSTFKAKAQELRDSLIYDITVAMKAREVQDAVKAGNLDKAKAAVDQINQYLPKVTDAFKTELTEVAKKALDADEAALTPKVESVSAINTQNKAVELTAVPVNGTLKLQLSAAANEDTVNVNTVRIYKVDGNIPFALNTADVSLSTDGKTITVDASTPFENNTEYKVVVKGIKDKNGKEFKEDAFTFKLRNDAVVTQVFGTNVTNNTSVNLAAGTFDTDDTLTVVFDKLLAPETVNSSNVTITDVETGKRIPVIASTSGSTITITLKEALVTGKQYKLAINNVKTLTGYNAEAYELVFTANASAPTVATAPTTLGGTTLSTGSLTTNVWGKLAGGVNEAGTYYPGLQFTTTFATKLDESTLADNFVLVEKESGTVVASELKYNADAKMVTLVPKADLKENTIYQIKIKKGLKSDKGIELGTVNEKTYEFKTQDLTAPTVISVTSKNGDAGLKVTEAQEFTVKFSENLNTFNATTVSGSTITYGQVAVVKAGANLSALTASDIIPASVEAVTGQDGTYKVKVAANQLERNQGYKLVVFGKGATAPVKDAANANTLATNYIYTFTTEGQDVTAPTVTKVFKGDSLKDADAVTTLTNVDAGQKFTIQFSEELKTSSGSLVGGKVTVEKLTNNGWVDAGTGTTVSVAPKTDANGKVTAAVVTLTGLDNNDKDAKLRLVVDKSSTDGIADVAGNVIKEKDILIRYNSWRHTVASVKAAADKDGQNASAAFPTSTAIDTTKSLLVEFNETDLAEVKPENIVVKDAAGNAVAGTVTALDGSTNKFVFTPSQELKAGTVYSVTIDGVRDKVGNTISKYITSFKTVSANPTLSSISIADGAVNVDRSKTITIEFSDSVPNPTITLKKADGTSFTNYTLVNVNNENKTYKIVFHKGVTLDEFTQYELAVSKDFQTGTDIDSKVTFITGSVATDEVKPALVGVGSWNGTSYTQDAAATRLRSVADFVAEPVALQFSEGIDLTNATVTVTNITDDKTVEVISKESVDADHDAGATKETLVINTVTPLVLDNSKTYKIVVSGVKDAAGNVADTITFYIK</sequence>